<reference key="1">
    <citation type="journal article" date="2008" name="Proc. Natl. Acad. Sci. U.S.A.">
        <title>The genome of Cyanothece 51142, a unicellular diazotrophic cyanobacterium important in the marine nitrogen cycle.</title>
        <authorList>
            <person name="Welsh E.A."/>
            <person name="Liberton M."/>
            <person name="Stoeckel J."/>
            <person name="Loh T."/>
            <person name="Elvitigala T."/>
            <person name="Wang C."/>
            <person name="Wollam A."/>
            <person name="Fulton R.S."/>
            <person name="Clifton S.W."/>
            <person name="Jacobs J.M."/>
            <person name="Aurora R."/>
            <person name="Ghosh B.K."/>
            <person name="Sherman L.A."/>
            <person name="Smith R.D."/>
            <person name="Wilson R.K."/>
            <person name="Pakrasi H.B."/>
        </authorList>
    </citation>
    <scope>NUCLEOTIDE SEQUENCE [LARGE SCALE GENOMIC DNA]</scope>
    <source>
        <strain>ATCC 51142 / BH68</strain>
    </source>
</reference>
<gene>
    <name evidence="1" type="primary">mntP</name>
    <name type="ordered locus">cce_3994</name>
</gene>
<proteinExistence type="inferred from homology"/>
<accession>B1WQP0</accession>
<name>MNTP_CROS5</name>
<protein>
    <recommendedName>
        <fullName evidence="1">Putative manganese efflux pump MntP</fullName>
    </recommendedName>
</protein>
<feature type="chain" id="PRO_1000185106" description="Putative manganese efflux pump MntP">
    <location>
        <begin position="1"/>
        <end position="188"/>
    </location>
</feature>
<feature type="transmembrane region" description="Helical" evidence="1">
    <location>
        <begin position="8"/>
        <end position="28"/>
    </location>
</feature>
<feature type="transmembrane region" description="Helical" evidence="1">
    <location>
        <begin position="39"/>
        <end position="59"/>
    </location>
</feature>
<feature type="transmembrane region" description="Helical" evidence="1">
    <location>
        <begin position="68"/>
        <end position="88"/>
    </location>
</feature>
<feature type="transmembrane region" description="Helical" evidence="1">
    <location>
        <begin position="106"/>
        <end position="126"/>
    </location>
</feature>
<feature type="transmembrane region" description="Helical" evidence="1">
    <location>
        <begin position="131"/>
        <end position="151"/>
    </location>
</feature>
<feature type="transmembrane region" description="Helical" evidence="1">
    <location>
        <begin position="164"/>
        <end position="184"/>
    </location>
</feature>
<comment type="function">
    <text evidence="1">Probably functions as a manganese efflux pump.</text>
</comment>
<comment type="subcellular location">
    <subcellularLocation>
        <location evidence="1">Cell inner membrane</location>
        <topology evidence="1">Multi-pass membrane protein</topology>
    </subcellularLocation>
</comment>
<comment type="similarity">
    <text evidence="1">Belongs to the MntP (TC 9.B.29) family.</text>
</comment>
<dbReference type="EMBL" id="CP000806">
    <property type="protein sequence ID" value="ACB53342.1"/>
    <property type="molecule type" value="Genomic_DNA"/>
</dbReference>
<dbReference type="RefSeq" id="WP_009543914.1">
    <property type="nucleotide sequence ID" value="NC_010546.1"/>
</dbReference>
<dbReference type="STRING" id="43989.cce_3994"/>
<dbReference type="KEGG" id="cyt:cce_3994"/>
<dbReference type="eggNOG" id="COG1971">
    <property type="taxonomic scope" value="Bacteria"/>
</dbReference>
<dbReference type="HOGENOM" id="CLU_096410_3_0_3"/>
<dbReference type="OrthoDB" id="9811590at2"/>
<dbReference type="Proteomes" id="UP000001203">
    <property type="component" value="Chromosome circular"/>
</dbReference>
<dbReference type="GO" id="GO:0005886">
    <property type="term" value="C:plasma membrane"/>
    <property type="evidence" value="ECO:0007669"/>
    <property type="project" value="UniProtKB-SubCell"/>
</dbReference>
<dbReference type="GO" id="GO:0005384">
    <property type="term" value="F:manganese ion transmembrane transporter activity"/>
    <property type="evidence" value="ECO:0007669"/>
    <property type="project" value="UniProtKB-UniRule"/>
</dbReference>
<dbReference type="HAMAP" id="MF_01521">
    <property type="entry name" value="MntP_pump"/>
    <property type="match status" value="1"/>
</dbReference>
<dbReference type="InterPro" id="IPR003810">
    <property type="entry name" value="Mntp/YtaF"/>
</dbReference>
<dbReference type="InterPro" id="IPR022929">
    <property type="entry name" value="Put_MntP"/>
</dbReference>
<dbReference type="PANTHER" id="PTHR35529">
    <property type="entry name" value="MANGANESE EFFLUX PUMP MNTP-RELATED"/>
    <property type="match status" value="1"/>
</dbReference>
<dbReference type="PANTHER" id="PTHR35529:SF1">
    <property type="entry name" value="MANGANESE EFFLUX PUMP MNTP-RELATED"/>
    <property type="match status" value="1"/>
</dbReference>
<dbReference type="Pfam" id="PF02659">
    <property type="entry name" value="Mntp"/>
    <property type="match status" value="1"/>
</dbReference>
<sequence length="188" mass="20504">MELVNITCLGLGLAADAFAVSLSSGFVIQRIKFNKALKIALFFGIFQAIMPLIGWLTGLSFREFMTNIDHWIAFILLLGIGSKMIYEAYKEMDDDDKFNPLDTYTLLALAIATSIDALAAGLGLSLLKTSILLPCTLIGLITFVLSFIGVFIGHKFGSIFNKKIEIIGGLTLIIIGSKILIEDLIKPI</sequence>
<organism>
    <name type="scientific">Crocosphaera subtropica (strain ATCC 51142 / BH68)</name>
    <name type="common">Cyanothece sp. (strain ATCC 51142)</name>
    <dbReference type="NCBI Taxonomy" id="43989"/>
    <lineage>
        <taxon>Bacteria</taxon>
        <taxon>Bacillati</taxon>
        <taxon>Cyanobacteriota</taxon>
        <taxon>Cyanophyceae</taxon>
        <taxon>Oscillatoriophycideae</taxon>
        <taxon>Chroococcales</taxon>
        <taxon>Aphanothecaceae</taxon>
        <taxon>Crocosphaera</taxon>
        <taxon>Crocosphaera subtropica</taxon>
    </lineage>
</organism>
<evidence type="ECO:0000255" key="1">
    <source>
        <dbReference type="HAMAP-Rule" id="MF_01521"/>
    </source>
</evidence>
<keyword id="KW-0997">Cell inner membrane</keyword>
<keyword id="KW-1003">Cell membrane</keyword>
<keyword id="KW-0406">Ion transport</keyword>
<keyword id="KW-0464">Manganese</keyword>
<keyword id="KW-0472">Membrane</keyword>
<keyword id="KW-1185">Reference proteome</keyword>
<keyword id="KW-0812">Transmembrane</keyword>
<keyword id="KW-1133">Transmembrane helix</keyword>
<keyword id="KW-0813">Transport</keyword>